<evidence type="ECO:0000250" key="1"/>
<evidence type="ECO:0000250" key="2">
    <source>
        <dbReference type="UniProtKB" id="Q9NZD2"/>
    </source>
</evidence>
<evidence type="ECO:0000305" key="3"/>
<feature type="chain" id="PRO_0000343613" description="Glycolipid transfer protein">
    <location>
        <begin position="1"/>
        <end position="209"/>
    </location>
</feature>
<feature type="repeat" description="1">
    <location>
        <begin position="45"/>
        <end position="55"/>
    </location>
</feature>
<feature type="repeat" description="2">
    <location>
        <begin position="56"/>
        <end position="66"/>
    </location>
</feature>
<feature type="region of interest" description="2 X 12 AA approximate tandem repeats">
    <location>
        <begin position="45"/>
        <end position="66"/>
    </location>
</feature>
<feature type="binding site" evidence="2">
    <location>
        <begin position="48"/>
        <end position="55"/>
    </location>
    <ligand>
        <name>beta-D-galactosyl-(1-&gt;4)-beta-D-glucosyl-(1&lt;-&gt;1)-N-[(9Z)-octadecenoyl]-sphing-4-enine</name>
        <dbReference type="ChEBI" id="CHEBI:131557"/>
    </ligand>
</feature>
<feature type="binding site" evidence="2">
    <location>
        <position position="140"/>
    </location>
    <ligand>
        <name>beta-D-galactosyl-(1-&gt;4)-beta-D-glucosyl-(1&lt;-&gt;1)-N-[(9Z)-octadecenoyl]-sphing-4-enine</name>
        <dbReference type="ChEBI" id="CHEBI:131557"/>
    </ligand>
</feature>
<feature type="binding site" evidence="2">
    <location>
        <position position="207"/>
    </location>
    <ligand>
        <name>beta-D-galactosyl-(1-&gt;4)-beta-D-glucosyl-(1&lt;-&gt;1)-N-[(9Z)-octadecenoyl]-sphing-4-enine</name>
        <dbReference type="ChEBI" id="CHEBI:131557"/>
    </ligand>
</feature>
<name>GLTP_XENTR</name>
<keyword id="KW-0963">Cytoplasm</keyword>
<keyword id="KW-0445">Lipid transport</keyword>
<keyword id="KW-1185">Reference proteome</keyword>
<keyword id="KW-0677">Repeat</keyword>
<keyword id="KW-0813">Transport</keyword>
<proteinExistence type="evidence at transcript level"/>
<reference key="1">
    <citation type="submission" date="2008-01" db="EMBL/GenBank/DDBJ databases">
        <authorList>
            <consortium name="NIH - Xenopus Gene Collection (XGC) project"/>
        </authorList>
    </citation>
    <scope>NUCLEOTIDE SEQUENCE [LARGE SCALE MRNA]</scope>
    <source>
        <tissue>Embryo</tissue>
    </source>
</reference>
<gene>
    <name type="primary">gltp</name>
</gene>
<accession>B0BLT4</accession>
<sequence length="209" mass="23906">MSVLLQHQFKPLPADKQIDTCCFLDSVSHLPAFFDCFGSAIFSPIKADITGNISKIRSVYESNPSKFKTLQMILEGEKELHGPQWPKVGATLALMWLKRGLKFIQVMLQSIADGERDDQNPNLIKVNITKAYEIALKKYHGWFVQKIFQTALIAAPYKDDFLKALSKGQTVKEEECIEKIRQFLVNYTTTIEAIYIMYNKMNAELDYKA</sequence>
<dbReference type="EMBL" id="BC158153">
    <property type="protein sequence ID" value="AAI58154.1"/>
    <property type="molecule type" value="mRNA"/>
</dbReference>
<dbReference type="SMR" id="B0BLT4"/>
<dbReference type="FunCoup" id="B0BLT4">
    <property type="interactions" value="690"/>
</dbReference>
<dbReference type="STRING" id="8364.ENSXETP00000009797"/>
<dbReference type="PaxDb" id="8364-ENSXETP00000040315"/>
<dbReference type="eggNOG" id="KOG3221">
    <property type="taxonomic scope" value="Eukaryota"/>
</dbReference>
<dbReference type="InParanoid" id="B0BLT4"/>
<dbReference type="Proteomes" id="UP000008143">
    <property type="component" value="Unplaced"/>
</dbReference>
<dbReference type="GO" id="GO:0005737">
    <property type="term" value="C:cytoplasm"/>
    <property type="evidence" value="ECO:0007669"/>
    <property type="project" value="UniProtKB-SubCell"/>
</dbReference>
<dbReference type="GO" id="GO:0120013">
    <property type="term" value="F:lipid transfer activity"/>
    <property type="evidence" value="ECO:0007669"/>
    <property type="project" value="InterPro"/>
</dbReference>
<dbReference type="FunFam" id="1.10.3520.10:FF:000003">
    <property type="entry name" value="glycolipid transfer protein"/>
    <property type="match status" value="1"/>
</dbReference>
<dbReference type="Gene3D" id="1.10.3520.10">
    <property type="entry name" value="Glycolipid transfer protein"/>
    <property type="match status" value="1"/>
</dbReference>
<dbReference type="InterPro" id="IPR036497">
    <property type="entry name" value="GLTP_sf"/>
</dbReference>
<dbReference type="InterPro" id="IPR014830">
    <property type="entry name" value="Glycolipid_transfer_prot_dom"/>
</dbReference>
<dbReference type="PANTHER" id="PTHR10219:SF97">
    <property type="entry name" value="GLYCOLIPID TRANSFER PROTEIN"/>
    <property type="match status" value="1"/>
</dbReference>
<dbReference type="PANTHER" id="PTHR10219">
    <property type="entry name" value="GLYCOLIPID TRANSFER PROTEIN-RELATED"/>
    <property type="match status" value="1"/>
</dbReference>
<dbReference type="Pfam" id="PF08718">
    <property type="entry name" value="GLTP"/>
    <property type="match status" value="1"/>
</dbReference>
<dbReference type="SUPFAM" id="SSF110004">
    <property type="entry name" value="Glycolipid transfer protein, GLTP"/>
    <property type="match status" value="1"/>
</dbReference>
<comment type="function">
    <text evidence="1">Accelerates the intermembrane transfer of various glycolipids. Catalyzes the transfer of various glycosphingolipids between membranes but does not catalyze the transfer of phospholipids. May be involved in the intracellular translocation of glucosylceramides (By similarity).</text>
</comment>
<comment type="subcellular location">
    <subcellularLocation>
        <location evidence="1">Cytoplasm</location>
    </subcellularLocation>
</comment>
<comment type="similarity">
    <text evidence="3">Belongs to the GLTP family.</text>
</comment>
<protein>
    <recommendedName>
        <fullName>Glycolipid transfer protein</fullName>
        <shortName>GLTP</shortName>
    </recommendedName>
</protein>
<organism>
    <name type="scientific">Xenopus tropicalis</name>
    <name type="common">Western clawed frog</name>
    <name type="synonym">Silurana tropicalis</name>
    <dbReference type="NCBI Taxonomy" id="8364"/>
    <lineage>
        <taxon>Eukaryota</taxon>
        <taxon>Metazoa</taxon>
        <taxon>Chordata</taxon>
        <taxon>Craniata</taxon>
        <taxon>Vertebrata</taxon>
        <taxon>Euteleostomi</taxon>
        <taxon>Amphibia</taxon>
        <taxon>Batrachia</taxon>
        <taxon>Anura</taxon>
        <taxon>Pipoidea</taxon>
        <taxon>Pipidae</taxon>
        <taxon>Xenopodinae</taxon>
        <taxon>Xenopus</taxon>
        <taxon>Silurana</taxon>
    </lineage>
</organism>